<comment type="miscellaneous">
    <text>It is not know if this bacteria is hemolytic.</text>
</comment>
<comment type="similarity">
    <text evidence="2">Belongs to the UPF0053 family. Hemolysin C subfamily.</text>
</comment>
<accession>A8GPR9</accession>
<proteinExistence type="inferred from homology"/>
<reference key="1">
    <citation type="submission" date="2007-09" db="EMBL/GenBank/DDBJ databases">
        <title>Complete genome sequence of Rickettsia akari.</title>
        <authorList>
            <person name="Madan A."/>
            <person name="Fahey J."/>
            <person name="Helton E."/>
            <person name="Ketteman M."/>
            <person name="Madan A."/>
            <person name="Rodrigues S."/>
            <person name="Sanchez A."/>
            <person name="Whiting M."/>
            <person name="Dasch G."/>
            <person name="Eremeeva M."/>
        </authorList>
    </citation>
    <scope>NUCLEOTIDE SEQUENCE [LARGE SCALE GENOMIC DNA]</scope>
    <source>
        <strain>Hartford</strain>
    </source>
</reference>
<evidence type="ECO:0000255" key="1">
    <source>
        <dbReference type="PROSITE-ProRule" id="PRU00703"/>
    </source>
</evidence>
<evidence type="ECO:0000305" key="2"/>
<sequence length="301" mass="34117">MLKSSKKEDSSKKNQNNNLIFTVRKLFSPIKNFFRTTKTPDNFFGVIKRLKINIQKMTLDERNILANLLELEDKTIEDIMVPRSDIVAIKLTANLAELSESIKLEVPHTRTLIYDGTLDNVVGFIHIKDLFKALATKQNGRLKKLIRKHIIAAPSMKLLDLLAKMRRERTHIAIVVDEYGGTDGLVTIEDLIEEIVGRIDDEHDQQLDSDNFKVINNSTIISNARVEVEVLEEIIGEKLKNDDDEFDTIGGLVLTRVSSVPVIGTRIDISENIEIEVTDATPRSLKQVKIRLKNGLHSDKI</sequence>
<organism>
    <name type="scientific">Rickettsia akari (strain Hartford)</name>
    <dbReference type="NCBI Taxonomy" id="293614"/>
    <lineage>
        <taxon>Bacteria</taxon>
        <taxon>Pseudomonadati</taxon>
        <taxon>Pseudomonadota</taxon>
        <taxon>Alphaproteobacteria</taxon>
        <taxon>Rickettsiales</taxon>
        <taxon>Rickettsiaceae</taxon>
        <taxon>Rickettsieae</taxon>
        <taxon>Rickettsia</taxon>
        <taxon>spotted fever group</taxon>
    </lineage>
</organism>
<keyword id="KW-0129">CBS domain</keyword>
<keyword id="KW-0677">Repeat</keyword>
<feature type="chain" id="PRO_0000319026" description="Possible hemolysin C">
    <location>
        <begin position="1"/>
        <end position="301"/>
    </location>
</feature>
<feature type="domain" description="CBS 1" evidence="1">
    <location>
        <begin position="80"/>
        <end position="142"/>
    </location>
</feature>
<feature type="domain" description="CBS 2" evidence="1">
    <location>
        <begin position="145"/>
        <end position="202"/>
    </location>
</feature>
<name>HLYC_RICAH</name>
<dbReference type="EMBL" id="CP000847">
    <property type="protein sequence ID" value="ABV75394.1"/>
    <property type="molecule type" value="Genomic_DNA"/>
</dbReference>
<dbReference type="RefSeq" id="WP_012150023.1">
    <property type="nucleotide sequence ID" value="NC_009881.1"/>
</dbReference>
<dbReference type="SMR" id="A8GPR9"/>
<dbReference type="STRING" id="293614.A1C_05795"/>
<dbReference type="KEGG" id="rak:A1C_05795"/>
<dbReference type="eggNOG" id="COG1253">
    <property type="taxonomic scope" value="Bacteria"/>
</dbReference>
<dbReference type="HOGENOM" id="CLU_015237_3_1_5"/>
<dbReference type="Proteomes" id="UP000006830">
    <property type="component" value="Chromosome"/>
</dbReference>
<dbReference type="GO" id="GO:0005886">
    <property type="term" value="C:plasma membrane"/>
    <property type="evidence" value="ECO:0007669"/>
    <property type="project" value="TreeGrafter"/>
</dbReference>
<dbReference type="GO" id="GO:0050660">
    <property type="term" value="F:flavin adenine dinucleotide binding"/>
    <property type="evidence" value="ECO:0007669"/>
    <property type="project" value="InterPro"/>
</dbReference>
<dbReference type="CDD" id="cd04590">
    <property type="entry name" value="CBS_pair_CorC_HlyC_assoc"/>
    <property type="match status" value="1"/>
</dbReference>
<dbReference type="FunFam" id="3.10.580.10:FF:000002">
    <property type="entry name" value="Magnesium/cobalt efflux protein CorC"/>
    <property type="match status" value="1"/>
</dbReference>
<dbReference type="Gene3D" id="3.30.465.10">
    <property type="match status" value="1"/>
</dbReference>
<dbReference type="Gene3D" id="3.10.580.10">
    <property type="entry name" value="CBS-domain"/>
    <property type="match status" value="1"/>
</dbReference>
<dbReference type="InterPro" id="IPR000644">
    <property type="entry name" value="CBS_dom"/>
</dbReference>
<dbReference type="InterPro" id="IPR046342">
    <property type="entry name" value="CBS_dom_sf"/>
</dbReference>
<dbReference type="InterPro" id="IPR036318">
    <property type="entry name" value="FAD-bd_PCMH-like_sf"/>
</dbReference>
<dbReference type="InterPro" id="IPR016169">
    <property type="entry name" value="FAD-bd_PCMH_sub2"/>
</dbReference>
<dbReference type="InterPro" id="IPR044751">
    <property type="entry name" value="Ion_transp-like_CBS"/>
</dbReference>
<dbReference type="InterPro" id="IPR005170">
    <property type="entry name" value="Transptr-assoc_dom"/>
</dbReference>
<dbReference type="PANTHER" id="PTHR22777">
    <property type="entry name" value="HEMOLYSIN-RELATED"/>
    <property type="match status" value="1"/>
</dbReference>
<dbReference type="PANTHER" id="PTHR22777:SF27">
    <property type="entry name" value="MAGNESIUM AND COBALT EFFLUX PROTEIN CORC"/>
    <property type="match status" value="1"/>
</dbReference>
<dbReference type="Pfam" id="PF00571">
    <property type="entry name" value="CBS"/>
    <property type="match status" value="1"/>
</dbReference>
<dbReference type="Pfam" id="PF03471">
    <property type="entry name" value="CorC_HlyC"/>
    <property type="match status" value="1"/>
</dbReference>
<dbReference type="SMART" id="SM01091">
    <property type="entry name" value="CorC_HlyC"/>
    <property type="match status" value="1"/>
</dbReference>
<dbReference type="SUPFAM" id="SSF54631">
    <property type="entry name" value="CBS-domain pair"/>
    <property type="match status" value="1"/>
</dbReference>
<dbReference type="SUPFAM" id="SSF56176">
    <property type="entry name" value="FAD-binding/transporter-associated domain-like"/>
    <property type="match status" value="1"/>
</dbReference>
<dbReference type="PROSITE" id="PS51371">
    <property type="entry name" value="CBS"/>
    <property type="match status" value="2"/>
</dbReference>
<gene>
    <name type="primary">tlyC</name>
    <name type="ordered locus">A1C_05795</name>
</gene>
<protein>
    <recommendedName>
        <fullName>Possible hemolysin C</fullName>
    </recommendedName>
</protein>